<comment type="function">
    <text evidence="4">Has weak lytic activity toward S.aureus cells.</text>
</comment>
<comment type="catalytic activity">
    <reaction evidence="4">
        <text>Hydrolyzes the link between N-acetylmuramoyl residues and L-amino acid residues in certain cell-wall glycopeptides.</text>
        <dbReference type="EC" id="3.5.1.28"/>
    </reaction>
</comment>
<accession>Q2G278</accession>
<dbReference type="EC" id="3.5.1.28" evidence="4"/>
<dbReference type="EMBL" id="CP000253">
    <property type="protein sequence ID" value="ABD29903.1"/>
    <property type="molecule type" value="Genomic_DNA"/>
</dbReference>
<dbReference type="RefSeq" id="WP_000749380.1">
    <property type="nucleotide sequence ID" value="NZ_LS483365.1"/>
</dbReference>
<dbReference type="RefSeq" id="YP_499330.1">
    <property type="nucleotide sequence ID" value="NC_007795.1"/>
</dbReference>
<dbReference type="SMR" id="Q2G278"/>
<dbReference type="STRING" id="93061.SAOUHSC_00773"/>
<dbReference type="PaxDb" id="1280-SAXN108_0822"/>
<dbReference type="GeneID" id="3919064"/>
<dbReference type="KEGG" id="sao:SAOUHSC_00773"/>
<dbReference type="PATRIC" id="fig|93061.5.peg.695"/>
<dbReference type="eggNOG" id="COG1388">
    <property type="taxonomic scope" value="Bacteria"/>
</dbReference>
<dbReference type="eggNOG" id="COG3942">
    <property type="taxonomic scope" value="Bacteria"/>
</dbReference>
<dbReference type="HOGENOM" id="CLU_016043_11_1_9"/>
<dbReference type="OrthoDB" id="2409959at2"/>
<dbReference type="Proteomes" id="UP000008816">
    <property type="component" value="Chromosome"/>
</dbReference>
<dbReference type="GO" id="GO:0008932">
    <property type="term" value="F:lytic endotransglycosylase activity"/>
    <property type="evidence" value="ECO:0000318"/>
    <property type="project" value="GO_Central"/>
</dbReference>
<dbReference type="GO" id="GO:0008745">
    <property type="term" value="F:N-acetylmuramoyl-L-alanine amidase activity"/>
    <property type="evidence" value="ECO:0007669"/>
    <property type="project" value="UniProtKB-EC"/>
</dbReference>
<dbReference type="GO" id="GO:0071555">
    <property type="term" value="P:cell wall organization"/>
    <property type="evidence" value="ECO:0007669"/>
    <property type="project" value="UniProtKB-KW"/>
</dbReference>
<dbReference type="GO" id="GO:0042742">
    <property type="term" value="P:defense response to bacterium"/>
    <property type="evidence" value="ECO:0007669"/>
    <property type="project" value="UniProtKB-KW"/>
</dbReference>
<dbReference type="GO" id="GO:0031640">
    <property type="term" value="P:killing of cells of another organism"/>
    <property type="evidence" value="ECO:0007669"/>
    <property type="project" value="UniProtKB-KW"/>
</dbReference>
<dbReference type="CDD" id="cd00118">
    <property type="entry name" value="LysM"/>
    <property type="match status" value="1"/>
</dbReference>
<dbReference type="Gene3D" id="3.90.1720.10">
    <property type="entry name" value="endopeptidase domain like (from Nostoc punctiforme)"/>
    <property type="match status" value="1"/>
</dbReference>
<dbReference type="Gene3D" id="3.10.350.10">
    <property type="entry name" value="LysM domain"/>
    <property type="match status" value="1"/>
</dbReference>
<dbReference type="InterPro" id="IPR007921">
    <property type="entry name" value="CHAP_dom"/>
</dbReference>
<dbReference type="InterPro" id="IPR018392">
    <property type="entry name" value="LysM_dom"/>
</dbReference>
<dbReference type="InterPro" id="IPR036779">
    <property type="entry name" value="LysM_dom_sf"/>
</dbReference>
<dbReference type="InterPro" id="IPR038765">
    <property type="entry name" value="Papain-like_cys_pep_sf"/>
</dbReference>
<dbReference type="Pfam" id="PF05257">
    <property type="entry name" value="CHAP"/>
    <property type="match status" value="1"/>
</dbReference>
<dbReference type="Pfam" id="PF01476">
    <property type="entry name" value="LysM"/>
    <property type="match status" value="1"/>
</dbReference>
<dbReference type="SMART" id="SM00257">
    <property type="entry name" value="LysM"/>
    <property type="match status" value="1"/>
</dbReference>
<dbReference type="SUPFAM" id="SSF54001">
    <property type="entry name" value="Cysteine proteinases"/>
    <property type="match status" value="1"/>
</dbReference>
<dbReference type="SUPFAM" id="SSF54106">
    <property type="entry name" value="LysM domain"/>
    <property type="match status" value="1"/>
</dbReference>
<dbReference type="PROSITE" id="PS50911">
    <property type="entry name" value="CHAP"/>
    <property type="match status" value="1"/>
</dbReference>
<dbReference type="PROSITE" id="PS51782">
    <property type="entry name" value="LYSM"/>
    <property type="match status" value="1"/>
</dbReference>
<gene>
    <name evidence="6" type="ordered locus">SAOUHSC_00773</name>
</gene>
<evidence type="ECO:0000255" key="1"/>
<evidence type="ECO:0000255" key="2">
    <source>
        <dbReference type="PROSITE-ProRule" id="PRU00048"/>
    </source>
</evidence>
<evidence type="ECO:0000255" key="3">
    <source>
        <dbReference type="PROSITE-ProRule" id="PRU01118"/>
    </source>
</evidence>
<evidence type="ECO:0000269" key="4">
    <source>
    </source>
</evidence>
<evidence type="ECO:0000305" key="5"/>
<evidence type="ECO:0000312" key="6">
    <source>
        <dbReference type="EMBL" id="ABD29903.1"/>
    </source>
</evidence>
<reference key="1">
    <citation type="book" date="2006" name="Gram positive pathogens, 2nd edition">
        <title>The Staphylococcus aureus NCTC 8325 genome.</title>
        <editorList>
            <person name="Fischetti V."/>
            <person name="Novick R."/>
            <person name="Ferretti J."/>
            <person name="Portnoy D."/>
            <person name="Rood J."/>
        </editorList>
        <authorList>
            <person name="Gillaspy A.F."/>
            <person name="Worrell V."/>
            <person name="Orvis J."/>
            <person name="Roe B.A."/>
            <person name="Dyer D.W."/>
            <person name="Iandolo J.J."/>
        </authorList>
    </citation>
    <scope>NUCLEOTIDE SEQUENCE [LARGE SCALE GENOMIC DNA]</scope>
    <source>
        <strain>NCTC 8325 / PS 47</strain>
    </source>
</reference>
<reference key="2">
    <citation type="journal article" date="2015" name="Appl. Microbiol. Biotechnol.">
        <title>Discovery of novel S. aureus autolysins and molecular engineering to enhance bacteriolytic activity.</title>
        <authorList>
            <person name="Osipovitch D.C."/>
            <person name="Therrien S."/>
            <person name="Griswold K.E."/>
        </authorList>
    </citation>
    <scope>FUNCTION</scope>
    <scope>CATALYTIC ACTIVITY</scope>
    <source>
        <strain>ATCC 35556 / SA113</strain>
    </source>
</reference>
<feature type="signal peptide" evidence="1">
    <location>
        <begin position="1"/>
        <end position="24"/>
    </location>
</feature>
<feature type="chain" id="PRO_5004207712" description="Probable autolysin LDP" evidence="1">
    <location>
        <begin position="25"/>
        <end position="279"/>
    </location>
</feature>
<feature type="domain" description="LysM" evidence="3">
    <location>
        <begin position="51"/>
        <end position="94"/>
    </location>
</feature>
<feature type="domain" description="Peptidase C51" evidence="2">
    <location>
        <begin position="158"/>
        <end position="279"/>
    </location>
</feature>
<keyword id="KW-0929">Antimicrobial</keyword>
<keyword id="KW-0081">Bacteriolytic enzyme</keyword>
<keyword id="KW-0961">Cell wall biogenesis/degradation</keyword>
<keyword id="KW-0378">Hydrolase</keyword>
<keyword id="KW-1185">Reference proteome</keyword>
<keyword id="KW-0732">Signal</keyword>
<name>LDP_STAA8</name>
<proteinExistence type="evidence at protein level"/>
<organism>
    <name type="scientific">Staphylococcus aureus (strain NCTC 8325 / PS 47)</name>
    <dbReference type="NCBI Taxonomy" id="93061"/>
    <lineage>
        <taxon>Bacteria</taxon>
        <taxon>Bacillati</taxon>
        <taxon>Bacillota</taxon>
        <taxon>Bacilli</taxon>
        <taxon>Bacillales</taxon>
        <taxon>Staphylococcaceae</taxon>
        <taxon>Staphylococcus</taxon>
    </lineage>
</organism>
<protein>
    <recommendedName>
        <fullName evidence="5">Probable autolysin LDP</fullName>
        <ecNumber evidence="4">3.5.1.28</ecNumber>
    </recommendedName>
</protein>
<sequence length="279" mass="30284">MKKSLTVTVSSVLAFLALNNAAHAQQHGTQVKTPVQHNYVSNVQAQTQSPTTYTVVAGDSLYKIALEHHLTLNQLYSYNPGVTPLIFPGDVISLVPQNKVKQTKAVKSPVRKASQAKKVVKQPVQQASKKVVVKQAPKQAVTKTVNVAYKPAQVQKSVPTVPVAHNYNKSVANRGNLYAYGNCTYYAFDRRAQLGRSIGSLWGNANNWNYAAKVAGFKVDKTPEVGAIFQTAAGPYGHVGVVESVNPNGTITVSEMNYAGFNVKSSRTILNPGKYNYIH</sequence>